<gene>
    <name evidence="1" type="primary">mdtL</name>
    <name type="ordered locus">ECH74115_5141</name>
</gene>
<proteinExistence type="inferred from homology"/>
<accession>B5YXB4</accession>
<organism>
    <name type="scientific">Escherichia coli O157:H7 (strain EC4115 / EHEC)</name>
    <dbReference type="NCBI Taxonomy" id="444450"/>
    <lineage>
        <taxon>Bacteria</taxon>
        <taxon>Pseudomonadati</taxon>
        <taxon>Pseudomonadota</taxon>
        <taxon>Gammaproteobacteria</taxon>
        <taxon>Enterobacterales</taxon>
        <taxon>Enterobacteriaceae</taxon>
        <taxon>Escherichia</taxon>
    </lineage>
</organism>
<reference key="1">
    <citation type="journal article" date="2011" name="Proc. Natl. Acad. Sci. U.S.A.">
        <title>Genomic anatomy of Escherichia coli O157:H7 outbreaks.</title>
        <authorList>
            <person name="Eppinger M."/>
            <person name="Mammel M.K."/>
            <person name="Leclerc J.E."/>
            <person name="Ravel J."/>
            <person name="Cebula T.A."/>
        </authorList>
    </citation>
    <scope>NUCLEOTIDE SEQUENCE [LARGE SCALE GENOMIC DNA]</scope>
    <source>
        <strain>EC4115 / EHEC</strain>
    </source>
</reference>
<comment type="function">
    <text evidence="1">Confers resistance to chloramphenicol.</text>
</comment>
<comment type="subcellular location">
    <subcellularLocation>
        <location evidence="1">Cell inner membrane</location>
        <topology evidence="1">Multi-pass membrane protein</topology>
    </subcellularLocation>
</comment>
<comment type="similarity">
    <text evidence="1">Belongs to the major facilitator superfamily. DHA1 family. MdtL (TC 2.A.1.2.22) subfamily.</text>
</comment>
<protein>
    <recommendedName>
        <fullName evidence="1">Multidrug resistance protein MdtL</fullName>
    </recommendedName>
</protein>
<feature type="chain" id="PRO_1000200819" description="Multidrug resistance protein MdtL">
    <location>
        <begin position="1"/>
        <end position="391"/>
    </location>
</feature>
<feature type="transmembrane region" description="Helical" evidence="1">
    <location>
        <begin position="4"/>
        <end position="24"/>
    </location>
</feature>
<feature type="transmembrane region" description="Helical" evidence="1">
    <location>
        <begin position="42"/>
        <end position="62"/>
    </location>
</feature>
<feature type="transmembrane region" description="Helical" evidence="1">
    <location>
        <begin position="69"/>
        <end position="89"/>
    </location>
</feature>
<feature type="transmembrane region" description="Helical" evidence="1">
    <location>
        <begin position="93"/>
        <end position="113"/>
    </location>
</feature>
<feature type="transmembrane region" description="Helical" evidence="1">
    <location>
        <begin position="131"/>
        <end position="151"/>
    </location>
</feature>
<feature type="transmembrane region" description="Helical" evidence="1">
    <location>
        <begin position="158"/>
        <end position="178"/>
    </location>
</feature>
<feature type="transmembrane region" description="Helical" evidence="1">
    <location>
        <begin position="199"/>
        <end position="221"/>
    </location>
</feature>
<feature type="transmembrane region" description="Helical" evidence="1">
    <location>
        <begin position="245"/>
        <end position="265"/>
    </location>
</feature>
<feature type="transmembrane region" description="Helical" evidence="1">
    <location>
        <begin position="269"/>
        <end position="289"/>
    </location>
</feature>
<feature type="transmembrane region" description="Helical" evidence="1">
    <location>
        <begin position="293"/>
        <end position="313"/>
    </location>
</feature>
<feature type="transmembrane region" description="Helical" evidence="1">
    <location>
        <begin position="331"/>
        <end position="351"/>
    </location>
</feature>
<feature type="transmembrane region" description="Helical" evidence="1">
    <location>
        <begin position="356"/>
        <end position="376"/>
    </location>
</feature>
<keyword id="KW-0046">Antibiotic resistance</keyword>
<keyword id="KW-0997">Cell inner membrane</keyword>
<keyword id="KW-1003">Cell membrane</keyword>
<keyword id="KW-0472">Membrane</keyword>
<keyword id="KW-0812">Transmembrane</keyword>
<keyword id="KW-1133">Transmembrane helix</keyword>
<keyword id="KW-0813">Transport</keyword>
<evidence type="ECO:0000255" key="1">
    <source>
        <dbReference type="HAMAP-Rule" id="MF_01530"/>
    </source>
</evidence>
<name>MDTL_ECO5E</name>
<sequence>MSRFLICSFALVLLYPAGIDMYLVGLPRIAADLNASEAQLHIAFSVYLAGMAAAMLFAGKVADRSGRKPVAIPGAALFIITSVFCSLAETSTLFLAGRFLQGLGAGCCYVVAFAILRDTLDDRRRAKVLSLLNGITCIIPVLAPVLGHLIMLKFPWQSLFWTMAIMGIAVLMLSLFILKETRPAAPAASDKSRENSESLLNRFFLSRVVITTLSVSVILTFVNTSPVLLMEIMGFERGEYATIMALTAGVSMTVSFSTPFALGIFKPRTLMITSQVLFLAAGITLTVSPSHAVSLFGITLICAGFSVGFGVAMSQALGPFSLRAGVASSTLGIAQVCGSSLWIWLAAVVGISAWNMLIGILIACSIVSLLLIMFVAPGRPVTAHEEIHHHA</sequence>
<dbReference type="EMBL" id="CP001164">
    <property type="protein sequence ID" value="ACI34536.1"/>
    <property type="molecule type" value="Genomic_DNA"/>
</dbReference>
<dbReference type="RefSeq" id="WP_000086017.1">
    <property type="nucleotide sequence ID" value="NC_011353.1"/>
</dbReference>
<dbReference type="SMR" id="B5YXB4"/>
<dbReference type="KEGG" id="ecf:ECH74115_5141"/>
<dbReference type="HOGENOM" id="CLU_001265_47_1_6"/>
<dbReference type="GO" id="GO:0005886">
    <property type="term" value="C:plasma membrane"/>
    <property type="evidence" value="ECO:0007669"/>
    <property type="project" value="UniProtKB-SubCell"/>
</dbReference>
<dbReference type="GO" id="GO:0022857">
    <property type="term" value="F:transmembrane transporter activity"/>
    <property type="evidence" value="ECO:0007669"/>
    <property type="project" value="UniProtKB-UniRule"/>
</dbReference>
<dbReference type="GO" id="GO:0046677">
    <property type="term" value="P:response to antibiotic"/>
    <property type="evidence" value="ECO:0007669"/>
    <property type="project" value="UniProtKB-KW"/>
</dbReference>
<dbReference type="CDD" id="cd17320">
    <property type="entry name" value="MFS_MdfA_MDR_like"/>
    <property type="match status" value="1"/>
</dbReference>
<dbReference type="FunFam" id="1.20.1720.10:FF:000003">
    <property type="entry name" value="Multidrug resistance protein MdtL"/>
    <property type="match status" value="1"/>
</dbReference>
<dbReference type="Gene3D" id="1.20.1720.10">
    <property type="entry name" value="Multidrug resistance protein D"/>
    <property type="match status" value="1"/>
</dbReference>
<dbReference type="HAMAP" id="MF_01530">
    <property type="entry name" value="MFS_MdtL"/>
    <property type="match status" value="1"/>
</dbReference>
<dbReference type="InterPro" id="IPR011701">
    <property type="entry name" value="MFS"/>
</dbReference>
<dbReference type="InterPro" id="IPR020846">
    <property type="entry name" value="MFS_dom"/>
</dbReference>
<dbReference type="InterPro" id="IPR050189">
    <property type="entry name" value="MFS_Efflux_Transporters"/>
</dbReference>
<dbReference type="InterPro" id="IPR036259">
    <property type="entry name" value="MFS_trans_sf"/>
</dbReference>
<dbReference type="InterPro" id="IPR023697">
    <property type="entry name" value="Multidrug-R_MdtL"/>
</dbReference>
<dbReference type="NCBIfam" id="NF007782">
    <property type="entry name" value="PRK10473.1"/>
    <property type="match status" value="1"/>
</dbReference>
<dbReference type="PANTHER" id="PTHR43124:SF3">
    <property type="entry name" value="CHLORAMPHENICOL EFFLUX PUMP RV0191"/>
    <property type="match status" value="1"/>
</dbReference>
<dbReference type="PANTHER" id="PTHR43124">
    <property type="entry name" value="PURINE EFFLUX PUMP PBUE"/>
    <property type="match status" value="1"/>
</dbReference>
<dbReference type="Pfam" id="PF07690">
    <property type="entry name" value="MFS_1"/>
    <property type="match status" value="1"/>
</dbReference>
<dbReference type="SUPFAM" id="SSF103473">
    <property type="entry name" value="MFS general substrate transporter"/>
    <property type="match status" value="1"/>
</dbReference>
<dbReference type="PROSITE" id="PS50850">
    <property type="entry name" value="MFS"/>
    <property type="match status" value="1"/>
</dbReference>